<organism>
    <name type="scientific">Shigella sonnei (strain Ss046)</name>
    <dbReference type="NCBI Taxonomy" id="300269"/>
    <lineage>
        <taxon>Bacteria</taxon>
        <taxon>Pseudomonadati</taxon>
        <taxon>Pseudomonadota</taxon>
        <taxon>Gammaproteobacteria</taxon>
        <taxon>Enterobacterales</taxon>
        <taxon>Enterobacteriaceae</taxon>
        <taxon>Shigella</taxon>
    </lineage>
</organism>
<feature type="chain" id="PRO_0000253168" description="Putative membrane protein insertion efficiency factor">
    <location>
        <begin position="1"/>
        <end position="85"/>
    </location>
</feature>
<dbReference type="EMBL" id="CP000038">
    <property type="protein sequence ID" value="AAZ90203.1"/>
    <property type="molecule type" value="Genomic_DNA"/>
</dbReference>
<dbReference type="RefSeq" id="WP_001307474.1">
    <property type="nucleotide sequence ID" value="NC_007384.1"/>
</dbReference>
<dbReference type="GeneID" id="97443257"/>
<dbReference type="KEGG" id="ssn:SSON_3655"/>
<dbReference type="HOGENOM" id="CLU_144811_5_2_6"/>
<dbReference type="Proteomes" id="UP000002529">
    <property type="component" value="Chromosome"/>
</dbReference>
<dbReference type="GO" id="GO:0005886">
    <property type="term" value="C:plasma membrane"/>
    <property type="evidence" value="ECO:0007669"/>
    <property type="project" value="UniProtKB-SubCell"/>
</dbReference>
<dbReference type="HAMAP" id="MF_00386">
    <property type="entry name" value="UPF0161_YidD"/>
    <property type="match status" value="1"/>
</dbReference>
<dbReference type="InterPro" id="IPR002696">
    <property type="entry name" value="Membr_insert_effic_factor_YidD"/>
</dbReference>
<dbReference type="NCBIfam" id="TIGR00278">
    <property type="entry name" value="membrane protein insertion efficiency factor YidD"/>
    <property type="match status" value="1"/>
</dbReference>
<dbReference type="PANTHER" id="PTHR33383">
    <property type="entry name" value="MEMBRANE PROTEIN INSERTION EFFICIENCY FACTOR-RELATED"/>
    <property type="match status" value="1"/>
</dbReference>
<dbReference type="PANTHER" id="PTHR33383:SF1">
    <property type="entry name" value="MEMBRANE PROTEIN INSERTION EFFICIENCY FACTOR-RELATED"/>
    <property type="match status" value="1"/>
</dbReference>
<dbReference type="Pfam" id="PF01809">
    <property type="entry name" value="YidD"/>
    <property type="match status" value="1"/>
</dbReference>
<dbReference type="SMART" id="SM01234">
    <property type="entry name" value="Haemolytic"/>
    <property type="match status" value="1"/>
</dbReference>
<name>YIDD_SHISS</name>
<sequence>MAPPLSPGSRVLIALIRVYQRLISPLLGPHCRFTPTCSSYGIEALRRFGVIKGSWLTVKRVLKCHPLHPGGDDPVPPGPFDTREH</sequence>
<reference key="1">
    <citation type="journal article" date="2005" name="Nucleic Acids Res.">
        <title>Genome dynamics and diversity of Shigella species, the etiologic agents of bacillary dysentery.</title>
        <authorList>
            <person name="Yang F."/>
            <person name="Yang J."/>
            <person name="Zhang X."/>
            <person name="Chen L."/>
            <person name="Jiang Y."/>
            <person name="Yan Y."/>
            <person name="Tang X."/>
            <person name="Wang J."/>
            <person name="Xiong Z."/>
            <person name="Dong J."/>
            <person name="Xue Y."/>
            <person name="Zhu Y."/>
            <person name="Xu X."/>
            <person name="Sun L."/>
            <person name="Chen S."/>
            <person name="Nie H."/>
            <person name="Peng J."/>
            <person name="Xu J."/>
            <person name="Wang Y."/>
            <person name="Yuan Z."/>
            <person name="Wen Y."/>
            <person name="Yao Z."/>
            <person name="Shen Y."/>
            <person name="Qiang B."/>
            <person name="Hou Y."/>
            <person name="Yu J."/>
            <person name="Jin Q."/>
        </authorList>
    </citation>
    <scope>NUCLEOTIDE SEQUENCE [LARGE SCALE GENOMIC DNA]</scope>
    <source>
        <strain>Ss046</strain>
    </source>
</reference>
<evidence type="ECO:0000255" key="1">
    <source>
        <dbReference type="HAMAP-Rule" id="MF_00386"/>
    </source>
</evidence>
<proteinExistence type="inferred from homology"/>
<comment type="function">
    <text evidence="1">Could be involved in insertion of integral membrane proteins into the membrane.</text>
</comment>
<comment type="subcellular location">
    <subcellularLocation>
        <location evidence="1">Cell inner membrane</location>
        <topology evidence="1">Peripheral membrane protein</topology>
        <orientation evidence="1">Cytoplasmic side</orientation>
    </subcellularLocation>
</comment>
<comment type="similarity">
    <text evidence="1">Belongs to the UPF0161 family.</text>
</comment>
<protein>
    <recommendedName>
        <fullName evidence="1">Putative membrane protein insertion efficiency factor</fullName>
    </recommendedName>
</protein>
<gene>
    <name evidence="1" type="primary">yidD</name>
    <name type="ordered locus">SSON_3655</name>
</gene>
<keyword id="KW-0997">Cell inner membrane</keyword>
<keyword id="KW-1003">Cell membrane</keyword>
<keyword id="KW-0472">Membrane</keyword>
<keyword id="KW-1185">Reference proteome</keyword>
<accession>Q3YWA9</accession>